<comment type="function">
    <text evidence="1">Binds the lower part of the 30S subunit head.</text>
</comment>
<comment type="subunit">
    <text evidence="1">Part of the 30S ribosomal subunit.</text>
</comment>
<comment type="similarity">
    <text evidence="1">Belongs to the universal ribosomal protein uS3 family.</text>
</comment>
<protein>
    <recommendedName>
        <fullName evidence="1">Small ribosomal subunit protein uS3</fullName>
    </recommendedName>
    <alternativeName>
        <fullName evidence="2">30S ribosomal protein S3</fullName>
    </alternativeName>
</protein>
<feature type="chain" id="PRO_0000130263" description="Small ribosomal subunit protein uS3">
    <location>
        <begin position="1"/>
        <end position="225"/>
    </location>
</feature>
<feature type="domain" description="KH type-2" evidence="1">
    <location>
        <begin position="18"/>
        <end position="87"/>
    </location>
</feature>
<keyword id="KW-1185">Reference proteome</keyword>
<keyword id="KW-0687">Ribonucleoprotein</keyword>
<keyword id="KW-0689">Ribosomal protein</keyword>
<keyword id="KW-0694">RNA-binding</keyword>
<keyword id="KW-0699">rRNA-binding</keyword>
<accession>Q975I7</accession>
<proteinExistence type="inferred from homology"/>
<reference key="1">
    <citation type="journal article" date="2001" name="DNA Res.">
        <title>Complete genome sequence of an aerobic thermoacidophilic Crenarchaeon, Sulfolobus tokodaii strain7.</title>
        <authorList>
            <person name="Kawarabayasi Y."/>
            <person name="Hino Y."/>
            <person name="Horikawa H."/>
            <person name="Jin-no K."/>
            <person name="Takahashi M."/>
            <person name="Sekine M."/>
            <person name="Baba S."/>
            <person name="Ankai A."/>
            <person name="Kosugi H."/>
            <person name="Hosoyama A."/>
            <person name="Fukui S."/>
            <person name="Nagai Y."/>
            <person name="Nishijima K."/>
            <person name="Otsuka R."/>
            <person name="Nakazawa H."/>
            <person name="Takamiya M."/>
            <person name="Kato Y."/>
            <person name="Yoshizawa T."/>
            <person name="Tanaka T."/>
            <person name="Kudoh Y."/>
            <person name="Yamazaki J."/>
            <person name="Kushida N."/>
            <person name="Oguchi A."/>
            <person name="Aoki K."/>
            <person name="Masuda S."/>
            <person name="Yanagii M."/>
            <person name="Nishimura M."/>
            <person name="Yamagishi A."/>
            <person name="Oshima T."/>
            <person name="Kikuchi H."/>
        </authorList>
    </citation>
    <scope>NUCLEOTIDE SEQUENCE [LARGE SCALE GENOMIC DNA]</scope>
    <source>
        <strain>DSM 16993 / JCM 10545 / NBRC 100140 / 7</strain>
    </source>
</reference>
<organism>
    <name type="scientific">Sulfurisphaera tokodaii (strain DSM 16993 / JCM 10545 / NBRC 100140 / 7)</name>
    <name type="common">Sulfolobus tokodaii</name>
    <dbReference type="NCBI Taxonomy" id="273063"/>
    <lineage>
        <taxon>Archaea</taxon>
        <taxon>Thermoproteota</taxon>
        <taxon>Thermoprotei</taxon>
        <taxon>Sulfolobales</taxon>
        <taxon>Sulfolobaceae</taxon>
        <taxon>Sulfurisphaera</taxon>
    </lineage>
</organism>
<evidence type="ECO:0000255" key="1">
    <source>
        <dbReference type="HAMAP-Rule" id="MF_01309"/>
    </source>
</evidence>
<evidence type="ECO:0000305" key="2"/>
<name>RS3_SULTO</name>
<dbReference type="EMBL" id="BA000023">
    <property type="protein sequence ID" value="BAB65413.1"/>
    <property type="molecule type" value="Genomic_DNA"/>
</dbReference>
<dbReference type="RefSeq" id="WP_010978396.1">
    <property type="nucleotide sequence ID" value="NC_003106.2"/>
</dbReference>
<dbReference type="SMR" id="Q975I7"/>
<dbReference type="STRING" id="273063.STK_04240"/>
<dbReference type="KEGG" id="sto:STK_04240"/>
<dbReference type="PATRIC" id="fig|273063.9.peg.494"/>
<dbReference type="eggNOG" id="arCOG04097">
    <property type="taxonomic scope" value="Archaea"/>
</dbReference>
<dbReference type="OrthoDB" id="9126at2157"/>
<dbReference type="Proteomes" id="UP000001015">
    <property type="component" value="Chromosome"/>
</dbReference>
<dbReference type="GO" id="GO:0022627">
    <property type="term" value="C:cytosolic small ribosomal subunit"/>
    <property type="evidence" value="ECO:0007669"/>
    <property type="project" value="TreeGrafter"/>
</dbReference>
<dbReference type="GO" id="GO:0019843">
    <property type="term" value="F:rRNA binding"/>
    <property type="evidence" value="ECO:0007669"/>
    <property type="project" value="UniProtKB-UniRule"/>
</dbReference>
<dbReference type="GO" id="GO:0003735">
    <property type="term" value="F:structural constituent of ribosome"/>
    <property type="evidence" value="ECO:0007669"/>
    <property type="project" value="InterPro"/>
</dbReference>
<dbReference type="GO" id="GO:0006412">
    <property type="term" value="P:translation"/>
    <property type="evidence" value="ECO:0007669"/>
    <property type="project" value="UniProtKB-UniRule"/>
</dbReference>
<dbReference type="CDD" id="cd02411">
    <property type="entry name" value="KH-II_30S_S3_arch"/>
    <property type="match status" value="1"/>
</dbReference>
<dbReference type="FunFam" id="3.30.300.20:FF:000001">
    <property type="entry name" value="30S ribosomal protein S3"/>
    <property type="match status" value="1"/>
</dbReference>
<dbReference type="Gene3D" id="3.30.300.20">
    <property type="match status" value="1"/>
</dbReference>
<dbReference type="Gene3D" id="3.30.1140.32">
    <property type="entry name" value="Ribosomal protein S3, C-terminal domain"/>
    <property type="match status" value="1"/>
</dbReference>
<dbReference type="HAMAP" id="MF_01309_A">
    <property type="entry name" value="Ribosomal_uS3_A"/>
    <property type="match status" value="1"/>
</dbReference>
<dbReference type="InterPro" id="IPR004087">
    <property type="entry name" value="KH_dom"/>
</dbReference>
<dbReference type="InterPro" id="IPR015946">
    <property type="entry name" value="KH_dom-like_a/b"/>
</dbReference>
<dbReference type="InterPro" id="IPR004044">
    <property type="entry name" value="KH_dom_type_2"/>
</dbReference>
<dbReference type="InterPro" id="IPR009019">
    <property type="entry name" value="KH_sf_prok-type"/>
</dbReference>
<dbReference type="InterPro" id="IPR036419">
    <property type="entry name" value="Ribosomal_S3_C_sf"/>
</dbReference>
<dbReference type="InterPro" id="IPR027488">
    <property type="entry name" value="Ribosomal_uS3_arc"/>
</dbReference>
<dbReference type="InterPro" id="IPR001351">
    <property type="entry name" value="Ribosomal_uS3_C"/>
</dbReference>
<dbReference type="InterPro" id="IPR018280">
    <property type="entry name" value="Ribosomal_uS3_CS"/>
</dbReference>
<dbReference type="InterPro" id="IPR005703">
    <property type="entry name" value="Ribosomal_uS3_euk/arc"/>
</dbReference>
<dbReference type="NCBIfam" id="NF003219">
    <property type="entry name" value="PRK04191.1"/>
    <property type="match status" value="1"/>
</dbReference>
<dbReference type="NCBIfam" id="TIGR01008">
    <property type="entry name" value="uS3_euk_arch"/>
    <property type="match status" value="1"/>
</dbReference>
<dbReference type="PANTHER" id="PTHR11760">
    <property type="entry name" value="30S/40S RIBOSOMAL PROTEIN S3"/>
    <property type="match status" value="1"/>
</dbReference>
<dbReference type="PANTHER" id="PTHR11760:SF32">
    <property type="entry name" value="SMALL RIBOSOMAL SUBUNIT PROTEIN US3"/>
    <property type="match status" value="1"/>
</dbReference>
<dbReference type="Pfam" id="PF07650">
    <property type="entry name" value="KH_2"/>
    <property type="match status" value="1"/>
</dbReference>
<dbReference type="Pfam" id="PF00189">
    <property type="entry name" value="Ribosomal_S3_C"/>
    <property type="match status" value="1"/>
</dbReference>
<dbReference type="SMART" id="SM00322">
    <property type="entry name" value="KH"/>
    <property type="match status" value="1"/>
</dbReference>
<dbReference type="SUPFAM" id="SSF54814">
    <property type="entry name" value="Prokaryotic type KH domain (KH-domain type II)"/>
    <property type="match status" value="1"/>
</dbReference>
<dbReference type="SUPFAM" id="SSF54821">
    <property type="entry name" value="Ribosomal protein S3 C-terminal domain"/>
    <property type="match status" value="1"/>
</dbReference>
<dbReference type="PROSITE" id="PS50823">
    <property type="entry name" value="KH_TYPE_2"/>
    <property type="match status" value="1"/>
</dbReference>
<dbReference type="PROSITE" id="PS00548">
    <property type="entry name" value="RIBOSOMAL_S3"/>
    <property type="match status" value="1"/>
</dbReference>
<sequence length="225" mass="25109">MVLVKKYFLQRSMTKVMVDEYLAKQFYNAEYAGVEIVKTPIGTRVIIYAGRPALIIGKGGKTIKQLAQMLERYFGLDNPQITVTSVENPELNARVMAFRLAIALEKGYHFRRAAFITIRRIMNAGALGAEVIISGKLTSERAKYEKLKEGVVYKSGAFLDKIVDRAVAIAMLKPGVYGVEILITKPMKSVDKIELREQPKGPGENMVTVTNVSFIEESQKSGEQK</sequence>
<gene>
    <name evidence="1" type="primary">rps3</name>
    <name type="ordered locus">STK_04240</name>
</gene>